<name>DTPB_YERE8</name>
<evidence type="ECO:0000255" key="1">
    <source>
        <dbReference type="HAMAP-Rule" id="MF_01879"/>
    </source>
</evidence>
<gene>
    <name evidence="1" type="primary">dtpB</name>
    <name type="ordered locus">YE2391</name>
</gene>
<dbReference type="EMBL" id="AM286415">
    <property type="protein sequence ID" value="CAL12443.1"/>
    <property type="molecule type" value="Genomic_DNA"/>
</dbReference>
<dbReference type="RefSeq" id="WP_011816523.1">
    <property type="nucleotide sequence ID" value="NC_008800.1"/>
</dbReference>
<dbReference type="RefSeq" id="YP_001006610.1">
    <property type="nucleotide sequence ID" value="NC_008800.1"/>
</dbReference>
<dbReference type="SMR" id="A1JRI8"/>
<dbReference type="KEGG" id="yen:YE2391"/>
<dbReference type="PATRIC" id="fig|393305.7.peg.2545"/>
<dbReference type="eggNOG" id="COG3104">
    <property type="taxonomic scope" value="Bacteria"/>
</dbReference>
<dbReference type="HOGENOM" id="CLU_004790_0_0_6"/>
<dbReference type="OrthoDB" id="9772725at2"/>
<dbReference type="Proteomes" id="UP000000642">
    <property type="component" value="Chromosome"/>
</dbReference>
<dbReference type="GO" id="GO:0005886">
    <property type="term" value="C:plasma membrane"/>
    <property type="evidence" value="ECO:0007669"/>
    <property type="project" value="UniProtKB-SubCell"/>
</dbReference>
<dbReference type="GO" id="GO:0071916">
    <property type="term" value="F:dipeptide transmembrane transporter activity"/>
    <property type="evidence" value="ECO:0007669"/>
    <property type="project" value="UniProtKB-UniRule"/>
</dbReference>
<dbReference type="GO" id="GO:0015333">
    <property type="term" value="F:peptide:proton symporter activity"/>
    <property type="evidence" value="ECO:0007669"/>
    <property type="project" value="UniProtKB-UniRule"/>
</dbReference>
<dbReference type="GO" id="GO:0042937">
    <property type="term" value="F:tripeptide transmembrane transporter activity"/>
    <property type="evidence" value="ECO:0007669"/>
    <property type="project" value="UniProtKB-UniRule"/>
</dbReference>
<dbReference type="GO" id="GO:0015031">
    <property type="term" value="P:protein transport"/>
    <property type="evidence" value="ECO:0007669"/>
    <property type="project" value="UniProtKB-KW"/>
</dbReference>
<dbReference type="CDD" id="cd17346">
    <property type="entry name" value="MFS_DtpA_like"/>
    <property type="match status" value="1"/>
</dbReference>
<dbReference type="FunFam" id="1.20.1250.20:FF:000017">
    <property type="entry name" value="Dipeptide and tripeptide permease A"/>
    <property type="match status" value="1"/>
</dbReference>
<dbReference type="Gene3D" id="1.20.1250.20">
    <property type="entry name" value="MFS general substrate transporter like domains"/>
    <property type="match status" value="1"/>
</dbReference>
<dbReference type="HAMAP" id="MF_01879">
    <property type="entry name" value="PTR2_DtpB_subfam"/>
    <property type="match status" value="1"/>
</dbReference>
<dbReference type="InterPro" id="IPR023778">
    <property type="entry name" value="AA/pep_transptr_DtpB"/>
</dbReference>
<dbReference type="InterPro" id="IPR005279">
    <property type="entry name" value="Dipep/tripep_permease"/>
</dbReference>
<dbReference type="InterPro" id="IPR036259">
    <property type="entry name" value="MFS_trans_sf"/>
</dbReference>
<dbReference type="InterPro" id="IPR050171">
    <property type="entry name" value="MFS_Transporters"/>
</dbReference>
<dbReference type="InterPro" id="IPR000109">
    <property type="entry name" value="POT_fam"/>
</dbReference>
<dbReference type="InterPro" id="IPR018456">
    <property type="entry name" value="PTR2_symporter_CS"/>
</dbReference>
<dbReference type="NCBIfam" id="NF007575">
    <property type="entry name" value="PRK10207.1"/>
    <property type="match status" value="1"/>
</dbReference>
<dbReference type="NCBIfam" id="TIGR00924">
    <property type="entry name" value="yjdL_sub1_fam"/>
    <property type="match status" value="1"/>
</dbReference>
<dbReference type="PANTHER" id="PTHR23517:SF15">
    <property type="entry name" value="PROTON-DEPENDENT OLIGOPEPTIDE FAMILY TRANSPORT PROTEIN"/>
    <property type="match status" value="1"/>
</dbReference>
<dbReference type="PANTHER" id="PTHR23517">
    <property type="entry name" value="RESISTANCE PROTEIN MDTM, PUTATIVE-RELATED-RELATED"/>
    <property type="match status" value="1"/>
</dbReference>
<dbReference type="Pfam" id="PF00854">
    <property type="entry name" value="PTR2"/>
    <property type="match status" value="1"/>
</dbReference>
<dbReference type="SUPFAM" id="SSF103473">
    <property type="entry name" value="MFS general substrate transporter"/>
    <property type="match status" value="1"/>
</dbReference>
<dbReference type="PROSITE" id="PS01023">
    <property type="entry name" value="PTR2_2"/>
    <property type="match status" value="1"/>
</dbReference>
<reference key="1">
    <citation type="journal article" date="2006" name="PLoS Genet.">
        <title>The complete genome sequence and comparative genome analysis of the high pathogenicity Yersinia enterocolitica strain 8081.</title>
        <authorList>
            <person name="Thomson N.R."/>
            <person name="Howard S."/>
            <person name="Wren B.W."/>
            <person name="Holden M.T.G."/>
            <person name="Crossman L."/>
            <person name="Challis G.L."/>
            <person name="Churcher C."/>
            <person name="Mungall K."/>
            <person name="Brooks K."/>
            <person name="Chillingworth T."/>
            <person name="Feltwell T."/>
            <person name="Abdellah Z."/>
            <person name="Hauser H."/>
            <person name="Jagels K."/>
            <person name="Maddison M."/>
            <person name="Moule S."/>
            <person name="Sanders M."/>
            <person name="Whitehead S."/>
            <person name="Quail M.A."/>
            <person name="Dougan G."/>
            <person name="Parkhill J."/>
            <person name="Prentice M.B."/>
        </authorList>
    </citation>
    <scope>NUCLEOTIDE SEQUENCE [LARGE SCALE GENOMIC DNA]</scope>
    <source>
        <strain>NCTC 13174 / 8081</strain>
    </source>
</reference>
<keyword id="KW-0997">Cell inner membrane</keyword>
<keyword id="KW-1003">Cell membrane</keyword>
<keyword id="KW-0472">Membrane</keyword>
<keyword id="KW-0571">Peptide transport</keyword>
<keyword id="KW-0653">Protein transport</keyword>
<keyword id="KW-0812">Transmembrane</keyword>
<keyword id="KW-1133">Transmembrane helix</keyword>
<keyword id="KW-0813">Transport</keyword>
<feature type="chain" id="PRO_0000395191" description="Dipeptide and tripeptide permease B">
    <location>
        <begin position="1"/>
        <end position="493"/>
    </location>
</feature>
<feature type="topological domain" description="Cytoplasmic" evidence="1">
    <location>
        <begin position="1"/>
        <end position="27"/>
    </location>
</feature>
<feature type="transmembrane region" description="Helical" evidence="1">
    <location>
        <begin position="28"/>
        <end position="48"/>
    </location>
</feature>
<feature type="topological domain" description="Periplasmic" evidence="1">
    <location>
        <begin position="49"/>
        <end position="52"/>
    </location>
</feature>
<feature type="transmembrane region" description="Helical" evidence="1">
    <location>
        <begin position="53"/>
        <end position="73"/>
    </location>
</feature>
<feature type="topological domain" description="Cytoplasmic" evidence="1">
    <location>
        <begin position="74"/>
        <end position="82"/>
    </location>
</feature>
<feature type="transmembrane region" description="Helical" evidence="1">
    <location>
        <begin position="83"/>
        <end position="103"/>
    </location>
</feature>
<feature type="topological domain" description="Periplasmic" evidence="1">
    <location>
        <begin position="104"/>
        <end position="106"/>
    </location>
</feature>
<feature type="transmembrane region" description="Helical" evidence="1">
    <location>
        <begin position="107"/>
        <end position="127"/>
    </location>
</feature>
<feature type="topological domain" description="Cytoplasmic" evidence="1">
    <location>
        <begin position="128"/>
        <end position="146"/>
    </location>
</feature>
<feature type="transmembrane region" description="Helical" evidence="1">
    <location>
        <begin position="147"/>
        <end position="167"/>
    </location>
</feature>
<feature type="topological domain" description="Periplasmic" evidence="1">
    <location>
        <begin position="168"/>
        <end position="169"/>
    </location>
</feature>
<feature type="transmembrane region" description="Helical" evidence="1">
    <location>
        <begin position="170"/>
        <end position="190"/>
    </location>
</feature>
<feature type="topological domain" description="Cytoplasmic" evidence="1">
    <location>
        <begin position="191"/>
        <end position="212"/>
    </location>
</feature>
<feature type="transmembrane region" description="Helical" evidence="1">
    <location>
        <begin position="213"/>
        <end position="233"/>
    </location>
</feature>
<feature type="transmembrane region" description="Helical" evidence="1">
    <location>
        <begin position="234"/>
        <end position="254"/>
    </location>
</feature>
<feature type="topological domain" description="Cytoplasmic" evidence="1">
    <location>
        <begin position="255"/>
        <end position="267"/>
    </location>
</feature>
<feature type="transmembrane region" description="Helical" evidence="1">
    <location>
        <begin position="268"/>
        <end position="288"/>
    </location>
</feature>
<feature type="topological domain" description="Periplasmic" evidence="1">
    <location>
        <begin position="289"/>
        <end position="311"/>
    </location>
</feature>
<feature type="transmembrane region" description="Helical" evidence="1">
    <location>
        <begin position="312"/>
        <end position="332"/>
    </location>
</feature>
<feature type="topological domain" description="Cytoplasmic" evidence="1">
    <location>
        <begin position="333"/>
        <end position="350"/>
    </location>
</feature>
<feature type="transmembrane region" description="Helical" evidence="1">
    <location>
        <begin position="351"/>
        <end position="371"/>
    </location>
</feature>
<feature type="topological domain" description="Periplasmic" evidence="1">
    <location>
        <begin position="372"/>
        <end position="379"/>
    </location>
</feature>
<feature type="transmembrane region" description="Helical" evidence="1">
    <location>
        <begin position="380"/>
        <end position="400"/>
    </location>
</feature>
<feature type="topological domain" description="Cytoplasmic" evidence="1">
    <location>
        <begin position="401"/>
        <end position="424"/>
    </location>
</feature>
<feature type="transmembrane region" description="Helical" evidence="1">
    <location>
        <begin position="425"/>
        <end position="445"/>
    </location>
</feature>
<feature type="topological domain" description="Periplasmic" evidence="1">
    <location>
        <begin position="446"/>
        <end position="456"/>
    </location>
</feature>
<feature type="transmembrane region" description="Helical" evidence="1">
    <location>
        <begin position="457"/>
        <end position="477"/>
    </location>
</feature>
<feature type="topological domain" description="Cytoplasmic" evidence="1">
    <location>
        <begin position="478"/>
        <end position="493"/>
    </location>
</feature>
<comment type="function">
    <text evidence="1">Proton-dependent permease that transports di- and tripeptides.</text>
</comment>
<comment type="subcellular location">
    <subcellularLocation>
        <location evidence="1">Cell inner membrane</location>
        <topology evidence="1">Multi-pass membrane protein</topology>
    </subcellularLocation>
</comment>
<comment type="similarity">
    <text evidence="1">Belongs to the major facilitator superfamily. Proton-dependent oligopeptide transporter (POT/PTR) (TC 2.A.17) family. DtpB subfamily.</text>
</comment>
<organism>
    <name type="scientific">Yersinia enterocolitica serotype O:8 / biotype 1B (strain NCTC 13174 / 8081)</name>
    <dbReference type="NCBI Taxonomy" id="393305"/>
    <lineage>
        <taxon>Bacteria</taxon>
        <taxon>Pseudomonadati</taxon>
        <taxon>Pseudomonadota</taxon>
        <taxon>Gammaproteobacteria</taxon>
        <taxon>Enterobacterales</taxon>
        <taxon>Yersiniaceae</taxon>
        <taxon>Yersinia</taxon>
    </lineage>
</organism>
<sequence length="493" mass="54208">MERSTPTGLLQQPKPFFMIFFVELWERFGYYGVQGILAVFFVQQLGFSQEQAFVTFGAFAALVYGLISIGGYVGDHLLGTKRTMVLGAVVLAAGYFATGLSLYQPNLIFFALGTIAVGNGLFKANPASLLSKCYPPKDPRLDGAFTLFYMSINIGSLLSLSLAPVIAERFGYTVTYYLCGIGLIFALLVYFCCRHMVRHIGSEPDTKPLNWRNLLLVLLGSAVMICVCAWLMNHVFIANLVLIALSLIVVFIFFREASKQDRLGRNKMFVAFILMIEAIVFYVLYAQMPTSLNFFAINNVHHEILGFSINPVSFQALNPFWVVVASPILASIYTRLGSQNRDLSMPAKFTLGMFLCSLGFLTAAAAGMWFADAQGLTSPWFIVLVYLFQSLGELMISALGLAMVAALVPQYLMGFILGMWFLTQAASFLIGGYVATFTATPEGMTDPLETLPIYTDVFGKIGMVTLVIALVMALLIPWLNRMINSSAAEDAVA</sequence>
<protein>
    <recommendedName>
        <fullName evidence="1">Dipeptide and tripeptide permease B</fullName>
    </recommendedName>
</protein>
<accession>A1JRI8</accession>
<proteinExistence type="inferred from homology"/>